<proteinExistence type="inferred from homology"/>
<feature type="chain" id="PRO_0000375634" description="Succinyl-diaminopimelate desuccinylase">
    <location>
        <begin position="1"/>
        <end position="375"/>
    </location>
</feature>
<feature type="active site" evidence="1">
    <location>
        <position position="77"/>
    </location>
</feature>
<feature type="active site" description="Proton acceptor" evidence="1">
    <location>
        <position position="136"/>
    </location>
</feature>
<feature type="binding site" evidence="1">
    <location>
        <position position="75"/>
    </location>
    <ligand>
        <name>Zn(2+)</name>
        <dbReference type="ChEBI" id="CHEBI:29105"/>
        <label>1</label>
    </ligand>
</feature>
<feature type="binding site" evidence="1">
    <location>
        <position position="106"/>
    </location>
    <ligand>
        <name>Zn(2+)</name>
        <dbReference type="ChEBI" id="CHEBI:29105"/>
        <label>1</label>
    </ligand>
</feature>
<feature type="binding site" evidence="1">
    <location>
        <position position="106"/>
    </location>
    <ligand>
        <name>Zn(2+)</name>
        <dbReference type="ChEBI" id="CHEBI:29105"/>
        <label>2</label>
    </ligand>
</feature>
<feature type="binding site" evidence="1">
    <location>
        <position position="137"/>
    </location>
    <ligand>
        <name>Zn(2+)</name>
        <dbReference type="ChEBI" id="CHEBI:29105"/>
        <label>2</label>
    </ligand>
</feature>
<feature type="binding site" evidence="1">
    <location>
        <position position="165"/>
    </location>
    <ligand>
        <name>Zn(2+)</name>
        <dbReference type="ChEBI" id="CHEBI:29105"/>
        <label>1</label>
    </ligand>
</feature>
<feature type="binding site" evidence="1">
    <location>
        <position position="348"/>
    </location>
    <ligand>
        <name>Zn(2+)</name>
        <dbReference type="ChEBI" id="CHEBI:29105"/>
        <label>2</label>
    </ligand>
</feature>
<name>DAPE_NOVAD</name>
<accession>Q2GAU5</accession>
<gene>
    <name evidence="1" type="primary">dapE</name>
    <name type="ordered locus">Saro_0581</name>
</gene>
<comment type="function">
    <text evidence="1">Catalyzes the hydrolysis of N-succinyl-L,L-diaminopimelic acid (SDAP), forming succinate and LL-2,6-diaminopimelate (DAP), an intermediate involved in the bacterial biosynthesis of lysine and meso-diaminopimelic acid, an essential component of bacterial cell walls.</text>
</comment>
<comment type="catalytic activity">
    <reaction evidence="1">
        <text>N-succinyl-(2S,6S)-2,6-diaminopimelate + H2O = (2S,6S)-2,6-diaminopimelate + succinate</text>
        <dbReference type="Rhea" id="RHEA:22608"/>
        <dbReference type="ChEBI" id="CHEBI:15377"/>
        <dbReference type="ChEBI" id="CHEBI:30031"/>
        <dbReference type="ChEBI" id="CHEBI:57609"/>
        <dbReference type="ChEBI" id="CHEBI:58087"/>
        <dbReference type="EC" id="3.5.1.18"/>
    </reaction>
</comment>
<comment type="cofactor">
    <cofactor evidence="1">
        <name>Zn(2+)</name>
        <dbReference type="ChEBI" id="CHEBI:29105"/>
    </cofactor>
    <cofactor evidence="1">
        <name>Co(2+)</name>
        <dbReference type="ChEBI" id="CHEBI:48828"/>
    </cofactor>
    <text evidence="1">Binds 2 Zn(2+) or Co(2+) ions per subunit.</text>
</comment>
<comment type="pathway">
    <text evidence="1">Amino-acid biosynthesis; L-lysine biosynthesis via DAP pathway; LL-2,6-diaminopimelate from (S)-tetrahydrodipicolinate (succinylase route): step 3/3.</text>
</comment>
<comment type="subunit">
    <text evidence="1">Homodimer.</text>
</comment>
<comment type="similarity">
    <text evidence="1">Belongs to the peptidase M20A family. DapE subfamily.</text>
</comment>
<dbReference type="EC" id="3.5.1.18" evidence="1"/>
<dbReference type="EMBL" id="CP000248">
    <property type="protein sequence ID" value="ABD25028.1"/>
    <property type="molecule type" value="Genomic_DNA"/>
</dbReference>
<dbReference type="RefSeq" id="WP_011444242.1">
    <property type="nucleotide sequence ID" value="NC_007794.1"/>
</dbReference>
<dbReference type="SMR" id="Q2GAU5"/>
<dbReference type="STRING" id="279238.Saro_0581"/>
<dbReference type="KEGG" id="nar:Saro_0581"/>
<dbReference type="eggNOG" id="COG0624">
    <property type="taxonomic scope" value="Bacteria"/>
</dbReference>
<dbReference type="HOGENOM" id="CLU_021802_4_0_5"/>
<dbReference type="UniPathway" id="UPA00034">
    <property type="reaction ID" value="UER00021"/>
</dbReference>
<dbReference type="Proteomes" id="UP000009134">
    <property type="component" value="Chromosome"/>
</dbReference>
<dbReference type="GO" id="GO:0008777">
    <property type="term" value="F:acetylornithine deacetylase activity"/>
    <property type="evidence" value="ECO:0007669"/>
    <property type="project" value="TreeGrafter"/>
</dbReference>
<dbReference type="GO" id="GO:0050897">
    <property type="term" value="F:cobalt ion binding"/>
    <property type="evidence" value="ECO:0007669"/>
    <property type="project" value="UniProtKB-UniRule"/>
</dbReference>
<dbReference type="GO" id="GO:0009014">
    <property type="term" value="F:succinyl-diaminopimelate desuccinylase activity"/>
    <property type="evidence" value="ECO:0007669"/>
    <property type="project" value="UniProtKB-UniRule"/>
</dbReference>
<dbReference type="GO" id="GO:0008270">
    <property type="term" value="F:zinc ion binding"/>
    <property type="evidence" value="ECO:0007669"/>
    <property type="project" value="UniProtKB-UniRule"/>
</dbReference>
<dbReference type="GO" id="GO:0019877">
    <property type="term" value="P:diaminopimelate biosynthetic process"/>
    <property type="evidence" value="ECO:0007669"/>
    <property type="project" value="UniProtKB-UniRule"/>
</dbReference>
<dbReference type="GO" id="GO:0006526">
    <property type="term" value="P:L-arginine biosynthetic process"/>
    <property type="evidence" value="ECO:0007669"/>
    <property type="project" value="TreeGrafter"/>
</dbReference>
<dbReference type="GO" id="GO:0009089">
    <property type="term" value="P:lysine biosynthetic process via diaminopimelate"/>
    <property type="evidence" value="ECO:0007669"/>
    <property type="project" value="UniProtKB-UniRule"/>
</dbReference>
<dbReference type="CDD" id="cd03891">
    <property type="entry name" value="M20_DapE_proteobac"/>
    <property type="match status" value="1"/>
</dbReference>
<dbReference type="Gene3D" id="3.40.630.10">
    <property type="entry name" value="Zn peptidases"/>
    <property type="match status" value="2"/>
</dbReference>
<dbReference type="HAMAP" id="MF_01690">
    <property type="entry name" value="DapE"/>
    <property type="match status" value="1"/>
</dbReference>
<dbReference type="InterPro" id="IPR001261">
    <property type="entry name" value="ArgE/DapE_CS"/>
</dbReference>
<dbReference type="InterPro" id="IPR036264">
    <property type="entry name" value="Bact_exopeptidase_dim_dom"/>
</dbReference>
<dbReference type="InterPro" id="IPR005941">
    <property type="entry name" value="DapE_proteobac"/>
</dbReference>
<dbReference type="InterPro" id="IPR002933">
    <property type="entry name" value="Peptidase_M20"/>
</dbReference>
<dbReference type="InterPro" id="IPR011650">
    <property type="entry name" value="Peptidase_M20_dimer"/>
</dbReference>
<dbReference type="InterPro" id="IPR050072">
    <property type="entry name" value="Peptidase_M20A"/>
</dbReference>
<dbReference type="NCBIfam" id="TIGR01246">
    <property type="entry name" value="dapE_proteo"/>
    <property type="match status" value="1"/>
</dbReference>
<dbReference type="NCBIfam" id="NF009557">
    <property type="entry name" value="PRK13009.1"/>
    <property type="match status" value="1"/>
</dbReference>
<dbReference type="PANTHER" id="PTHR43808">
    <property type="entry name" value="ACETYLORNITHINE DEACETYLASE"/>
    <property type="match status" value="1"/>
</dbReference>
<dbReference type="PANTHER" id="PTHR43808:SF31">
    <property type="entry name" value="N-ACETYL-L-CITRULLINE DEACETYLASE"/>
    <property type="match status" value="1"/>
</dbReference>
<dbReference type="Pfam" id="PF07687">
    <property type="entry name" value="M20_dimer"/>
    <property type="match status" value="1"/>
</dbReference>
<dbReference type="Pfam" id="PF01546">
    <property type="entry name" value="Peptidase_M20"/>
    <property type="match status" value="1"/>
</dbReference>
<dbReference type="SUPFAM" id="SSF55031">
    <property type="entry name" value="Bacterial exopeptidase dimerisation domain"/>
    <property type="match status" value="1"/>
</dbReference>
<dbReference type="SUPFAM" id="SSF53187">
    <property type="entry name" value="Zn-dependent exopeptidases"/>
    <property type="match status" value="1"/>
</dbReference>
<dbReference type="PROSITE" id="PS00759">
    <property type="entry name" value="ARGE_DAPE_CPG2_2"/>
    <property type="match status" value="1"/>
</dbReference>
<sequence length="375" mass="39992">MTDLDPVVLAERLIDCPSITPATGAVFDCLQAMLEPLGFAIHRFVAGEAPDGPVENLFAIRKGPEGARHFAFAGHLDVVPPGEGWTSGPFKAERRGELLYGRGAVDMKGSIAAMVAAVAEIPADAGTLSFIITGDEEGPARYGTVPLIDLIRQLGAEPDLCLVGEPTSVHRLGDMVKIGRRGSVNMWIACKGAQGHVAYPHLADNPIPRLVALLADLDALVLDGGTEWFQPSNLEITDLEVGNPATNVIPAEARARISIRFNDRHTGAELVARVEEIAHRHKGEVRAVISGESFITLPGAFSAMIADAVKAETGLDPELSTSGGTSDARFLRAVCPVVEFGLCNATMHKKDEAVAMEDLRVLQRIYRRIALSALS</sequence>
<organism>
    <name type="scientific">Novosphingobium aromaticivorans (strain ATCC 700278 / DSM 12444 / CCUG 56034 / CIP 105152 / NBRC 16084 / F199)</name>
    <dbReference type="NCBI Taxonomy" id="279238"/>
    <lineage>
        <taxon>Bacteria</taxon>
        <taxon>Pseudomonadati</taxon>
        <taxon>Pseudomonadota</taxon>
        <taxon>Alphaproteobacteria</taxon>
        <taxon>Sphingomonadales</taxon>
        <taxon>Sphingomonadaceae</taxon>
        <taxon>Novosphingobium</taxon>
    </lineage>
</organism>
<reference key="1">
    <citation type="submission" date="2006-01" db="EMBL/GenBank/DDBJ databases">
        <title>Complete sequence of Novosphingobium aromaticivorans DSM 12444.</title>
        <authorList>
            <consortium name="US DOE Joint Genome Institute"/>
            <person name="Copeland A."/>
            <person name="Lucas S."/>
            <person name="Lapidus A."/>
            <person name="Barry K."/>
            <person name="Detter J.C."/>
            <person name="Glavina T."/>
            <person name="Hammon N."/>
            <person name="Israni S."/>
            <person name="Pitluck S."/>
            <person name="Chain P."/>
            <person name="Malfatti S."/>
            <person name="Shin M."/>
            <person name="Vergez L."/>
            <person name="Schmutz J."/>
            <person name="Larimer F."/>
            <person name="Land M."/>
            <person name="Kyrpides N."/>
            <person name="Ivanova N."/>
            <person name="Fredrickson J."/>
            <person name="Balkwill D."/>
            <person name="Romine M.F."/>
            <person name="Richardson P."/>
        </authorList>
    </citation>
    <scope>NUCLEOTIDE SEQUENCE [LARGE SCALE GENOMIC DNA]</scope>
    <source>
        <strain>ATCC 700278 / DSM 12444 / CCUG 56034 / CIP 105152 / NBRC 16084 / F199</strain>
    </source>
</reference>
<protein>
    <recommendedName>
        <fullName evidence="1">Succinyl-diaminopimelate desuccinylase</fullName>
        <shortName evidence="1">SDAP desuccinylase</shortName>
        <ecNumber evidence="1">3.5.1.18</ecNumber>
    </recommendedName>
    <alternativeName>
        <fullName evidence="1">N-succinyl-LL-2,6-diaminoheptanedioate amidohydrolase</fullName>
    </alternativeName>
</protein>
<evidence type="ECO:0000255" key="1">
    <source>
        <dbReference type="HAMAP-Rule" id="MF_01690"/>
    </source>
</evidence>
<keyword id="KW-0028">Amino-acid biosynthesis</keyword>
<keyword id="KW-0170">Cobalt</keyword>
<keyword id="KW-0220">Diaminopimelate biosynthesis</keyword>
<keyword id="KW-0378">Hydrolase</keyword>
<keyword id="KW-0457">Lysine biosynthesis</keyword>
<keyword id="KW-0479">Metal-binding</keyword>
<keyword id="KW-1185">Reference proteome</keyword>
<keyword id="KW-0862">Zinc</keyword>